<reference key="1">
    <citation type="journal article" date="2008" name="Science">
        <title>An alternative menaquinone biosynthetic pathway operating in microorganisms.</title>
        <authorList>
            <person name="Hiratsuka T."/>
            <person name="Furihata K."/>
            <person name="Ishikawa J."/>
            <person name="Yamashita H."/>
            <person name="Itoh N."/>
            <person name="Seto H."/>
            <person name="Dairi T."/>
        </authorList>
    </citation>
    <scope>NUCLEOTIDE SEQUENCE [GENOMIC DNA]</scope>
    <scope>ROLE IN MENAQUINONE BIOSYNTHESIS</scope>
    <scope>DISRUPTION PHENOTYPE</scope>
    <scope>PATHWAY</scope>
    <source>
        <strain>ATCC BAA-471 / A3(2) / M145</strain>
    </source>
</reference>
<reference key="2">
    <citation type="journal article" date="2002" name="Nature">
        <title>Complete genome sequence of the model actinomycete Streptomyces coelicolor A3(2).</title>
        <authorList>
            <person name="Bentley S.D."/>
            <person name="Chater K.F."/>
            <person name="Cerdeno-Tarraga A.-M."/>
            <person name="Challis G.L."/>
            <person name="Thomson N.R."/>
            <person name="James K.D."/>
            <person name="Harris D.E."/>
            <person name="Quail M.A."/>
            <person name="Kieser H."/>
            <person name="Harper D."/>
            <person name="Bateman A."/>
            <person name="Brown S."/>
            <person name="Chandra G."/>
            <person name="Chen C.W."/>
            <person name="Collins M."/>
            <person name="Cronin A."/>
            <person name="Fraser A."/>
            <person name="Goble A."/>
            <person name="Hidalgo J."/>
            <person name="Hornsby T."/>
            <person name="Howarth S."/>
            <person name="Huang C.-H."/>
            <person name="Kieser T."/>
            <person name="Larke L."/>
            <person name="Murphy L.D."/>
            <person name="Oliver K."/>
            <person name="O'Neil S."/>
            <person name="Rabbinowitsch E."/>
            <person name="Rajandream M.A."/>
            <person name="Rutherford K.M."/>
            <person name="Rutter S."/>
            <person name="Seeger K."/>
            <person name="Saunders D."/>
            <person name="Sharp S."/>
            <person name="Squares R."/>
            <person name="Squares S."/>
            <person name="Taylor K."/>
            <person name="Warren T."/>
            <person name="Wietzorrek A."/>
            <person name="Woodward J.R."/>
            <person name="Barrell B.G."/>
            <person name="Parkhill J."/>
            <person name="Hopwood D.A."/>
        </authorList>
    </citation>
    <scope>NUCLEOTIDE SEQUENCE [LARGE SCALE GENOMIC DNA]</scope>
    <source>
        <strain>ATCC BAA-471 / A3(2) / M145</strain>
    </source>
</reference>
<reference key="3">
    <citation type="submission" date="2009-02" db="PDB data bank">
        <title>The crystal structure of a hypothetical protein SCO4506 (gene ID: Q9L0T8) from Streptomyces coelicolor to 2.04 Angstrom resolution.</title>
        <authorList>
            <consortium name="New York structural genomix research consortium (NYSGXRC)"/>
        </authorList>
    </citation>
    <scope>X-RAY CRYSTALLOGRAPHY (2.04 ANGSTROMS)</scope>
</reference>
<organism>
    <name type="scientific">Streptomyces coelicolor (strain ATCC BAA-471 / A3(2) / M145)</name>
    <dbReference type="NCBI Taxonomy" id="100226"/>
    <lineage>
        <taxon>Bacteria</taxon>
        <taxon>Bacillati</taxon>
        <taxon>Actinomycetota</taxon>
        <taxon>Actinomycetes</taxon>
        <taxon>Kitasatosporales</taxon>
        <taxon>Streptomycetaceae</taxon>
        <taxon>Streptomyces</taxon>
        <taxon>Streptomyces albidoflavus group</taxon>
    </lineage>
</organism>
<evidence type="ECO:0000255" key="1">
    <source>
        <dbReference type="HAMAP-Rule" id="MF_00995"/>
    </source>
</evidence>
<evidence type="ECO:0000269" key="2">
    <source>
    </source>
</evidence>
<evidence type="ECO:0007829" key="3">
    <source>
        <dbReference type="PDB" id="7AN7"/>
    </source>
</evidence>
<feature type="chain" id="PRO_0000425124" description="Chorismate dehydratase">
    <location>
        <begin position="1"/>
        <end position="282"/>
    </location>
</feature>
<feature type="strand" evidence="3">
    <location>
        <begin position="9"/>
        <end position="13"/>
    </location>
</feature>
<feature type="helix" evidence="3">
    <location>
        <begin position="16"/>
        <end position="18"/>
    </location>
</feature>
<feature type="helix" evidence="3">
    <location>
        <begin position="19"/>
        <end position="27"/>
    </location>
</feature>
<feature type="helix" evidence="3">
    <location>
        <begin position="30"/>
        <end position="33"/>
    </location>
</feature>
<feature type="strand" evidence="3">
    <location>
        <begin position="35"/>
        <end position="39"/>
    </location>
</feature>
<feature type="helix" evidence="3">
    <location>
        <begin position="41"/>
        <end position="49"/>
    </location>
</feature>
<feature type="strand" evidence="3">
    <location>
        <begin position="54"/>
        <end position="59"/>
    </location>
</feature>
<feature type="helix" evidence="3">
    <location>
        <begin position="60"/>
        <end position="65"/>
    </location>
</feature>
<feature type="helix" evidence="3">
    <location>
        <begin position="66"/>
        <end position="69"/>
    </location>
</feature>
<feature type="strand" evidence="3">
    <location>
        <begin position="70"/>
        <end position="82"/>
    </location>
</feature>
<feature type="strand" evidence="3">
    <location>
        <begin position="85"/>
        <end position="93"/>
    </location>
</feature>
<feature type="helix" evidence="3">
    <location>
        <begin position="95"/>
        <end position="97"/>
    </location>
</feature>
<feature type="strand" evidence="3">
    <location>
        <begin position="102"/>
        <end position="106"/>
    </location>
</feature>
<feature type="helix" evidence="3">
    <location>
        <begin position="111"/>
        <end position="122"/>
    </location>
</feature>
<feature type="strand" evidence="3">
    <location>
        <begin position="129"/>
        <end position="133"/>
    </location>
</feature>
<feature type="helix" evidence="3">
    <location>
        <begin position="137"/>
        <end position="143"/>
    </location>
</feature>
<feature type="strand" evidence="3">
    <location>
        <begin position="145"/>
        <end position="150"/>
    </location>
</feature>
<feature type="helix" evidence="3">
    <location>
        <begin position="151"/>
        <end position="159"/>
    </location>
</feature>
<feature type="helix" evidence="3">
    <location>
        <begin position="161"/>
        <end position="165"/>
    </location>
</feature>
<feature type="strand" evidence="3">
    <location>
        <begin position="168"/>
        <end position="171"/>
    </location>
</feature>
<feature type="helix" evidence="3">
    <location>
        <begin position="172"/>
        <end position="180"/>
    </location>
</feature>
<feature type="strand" evidence="3">
    <location>
        <begin position="184"/>
        <end position="192"/>
    </location>
</feature>
<feature type="helix" evidence="3">
    <location>
        <begin position="193"/>
        <end position="198"/>
    </location>
</feature>
<feature type="helix" evidence="3">
    <location>
        <begin position="200"/>
        <end position="219"/>
    </location>
</feature>
<feature type="helix" evidence="3">
    <location>
        <begin position="221"/>
        <end position="229"/>
    </location>
</feature>
<feature type="strand" evidence="3">
    <location>
        <begin position="232"/>
        <end position="234"/>
    </location>
</feature>
<feature type="helix" evidence="3">
    <location>
        <begin position="236"/>
        <end position="245"/>
    </location>
</feature>
<feature type="helix" evidence="3">
    <location>
        <begin position="252"/>
        <end position="269"/>
    </location>
</feature>
<comment type="function">
    <text evidence="1">Catalyzes the dehydration of chorismate into 3-[(1-carboxyvinyl)oxy]benzoate, a step in the biosynthesis of menaquinone (MK, vitamin K2).</text>
</comment>
<comment type="catalytic activity">
    <reaction evidence="1">
        <text>chorismate = 3-[(1-carboxyvinyl)-oxy]benzoate + H2O</text>
        <dbReference type="Rhea" id="RHEA:40051"/>
        <dbReference type="ChEBI" id="CHEBI:15377"/>
        <dbReference type="ChEBI" id="CHEBI:29748"/>
        <dbReference type="ChEBI" id="CHEBI:76981"/>
        <dbReference type="EC" id="4.2.1.151"/>
    </reaction>
</comment>
<comment type="pathway">
    <text evidence="1 2">Quinol/quinone metabolism; menaquinone biosynthesis.</text>
</comment>
<comment type="disruption phenotype">
    <text evidence="2">Cells lacking this gene require menaquinone-4 (MK 4) for their growth.</text>
</comment>
<comment type="similarity">
    <text evidence="1">Belongs to the MqnA/MqnD family. MqnA subfamily.</text>
</comment>
<gene>
    <name evidence="1" type="primary">mqnA</name>
    <name type="ordered locus">SCO4506</name>
</gene>
<sequence>MDNSRTRPRVGHIQFLNCLPLYWGLARTGTLLDFELTKDTPEKLSEQLVRGDLDIGPVTLVEFLKNADDLVAFPDIAVGCDGPVMSCVIVSQVPLDRLDGARVALGSTSRTSVRLAQLLLSERFGVQPDYYTCPPDLSLMMQEADAAVLIGDAALRANMIDGPRYGLDVHDLGALWKEWTGLPFVFAVWAARRDYAEREPVITRKVHEAFLASRNLSLEEVEKVAEQAARWEAFDEDTLAKYFTTLDFRFGAPQLEAVTEFARRVGPTTGFPADVKVELLKP</sequence>
<name>MQNA_STRCO</name>
<proteinExistence type="evidence at protein level"/>
<dbReference type="EC" id="4.2.1.151" evidence="1"/>
<dbReference type="EMBL" id="AB447888">
    <property type="protein sequence ID" value="BAG71674.1"/>
    <property type="molecule type" value="Genomic_DNA"/>
</dbReference>
<dbReference type="EMBL" id="AL939120">
    <property type="protein sequence ID" value="CAB77297.1"/>
    <property type="molecule type" value="Genomic_DNA"/>
</dbReference>
<dbReference type="RefSeq" id="NP_628670.1">
    <property type="nucleotide sequence ID" value="NC_003888.3"/>
</dbReference>
<dbReference type="RefSeq" id="WP_003974442.1">
    <property type="nucleotide sequence ID" value="NZ_VNID01000017.1"/>
</dbReference>
<dbReference type="PDB" id="2NXO">
    <property type="method" value="X-ray"/>
    <property type="resolution" value="2.04 A"/>
    <property type="chains" value="A/B/C/D=2-282"/>
</dbReference>
<dbReference type="PDB" id="7AHR">
    <property type="method" value="X-ray"/>
    <property type="resolution" value="2.21 A"/>
    <property type="chains" value="A/B=2-282"/>
</dbReference>
<dbReference type="PDB" id="7AN5">
    <property type="method" value="X-ray"/>
    <property type="resolution" value="1.91 A"/>
    <property type="chains" value="A/B=2-282"/>
</dbReference>
<dbReference type="PDB" id="7AN6">
    <property type="method" value="X-ray"/>
    <property type="resolution" value="1.91 A"/>
    <property type="chains" value="A/B=2-282"/>
</dbReference>
<dbReference type="PDB" id="7AN7">
    <property type="method" value="X-ray"/>
    <property type="resolution" value="1.81 A"/>
    <property type="chains" value="A/B=2-282"/>
</dbReference>
<dbReference type="PDB" id="7AN8">
    <property type="method" value="X-ray"/>
    <property type="resolution" value="2.01 A"/>
    <property type="chains" value="A/B=2-282"/>
</dbReference>
<dbReference type="PDB" id="7AN9">
    <property type="method" value="X-ray"/>
    <property type="resolution" value="2.11 A"/>
    <property type="chains" value="A/B=2-282"/>
</dbReference>
<dbReference type="PDB" id="7YWC">
    <property type="method" value="X-ray"/>
    <property type="resolution" value="1.92 A"/>
    <property type="chains" value="A/B=3-282"/>
</dbReference>
<dbReference type="PDBsum" id="2NXO"/>
<dbReference type="PDBsum" id="7AHR"/>
<dbReference type="PDBsum" id="7AN5"/>
<dbReference type="PDBsum" id="7AN6"/>
<dbReference type="PDBsum" id="7AN7"/>
<dbReference type="PDBsum" id="7AN8"/>
<dbReference type="PDBsum" id="7AN9"/>
<dbReference type="PDBsum" id="7YWC"/>
<dbReference type="SMR" id="Q9L0T8"/>
<dbReference type="STRING" id="100226.gene:17762151"/>
<dbReference type="PaxDb" id="100226-SCO4506"/>
<dbReference type="KEGG" id="sco:SCO4506"/>
<dbReference type="PATRIC" id="fig|100226.15.peg.4579"/>
<dbReference type="eggNOG" id="COG1427">
    <property type="taxonomic scope" value="Bacteria"/>
</dbReference>
<dbReference type="HOGENOM" id="CLU_059898_0_0_11"/>
<dbReference type="InParanoid" id="Q9L0T8"/>
<dbReference type="OrthoDB" id="9810112at2"/>
<dbReference type="PhylomeDB" id="Q9L0T8"/>
<dbReference type="BioCyc" id="MetaCyc:MONOMER-14866"/>
<dbReference type="BRENDA" id="4.2.1.151">
    <property type="organism ID" value="5998"/>
</dbReference>
<dbReference type="UniPathway" id="UPA00079"/>
<dbReference type="EvolutionaryTrace" id="Q9L0T8"/>
<dbReference type="Proteomes" id="UP000001973">
    <property type="component" value="Chromosome"/>
</dbReference>
<dbReference type="GO" id="GO:0016836">
    <property type="term" value="F:hydro-lyase activity"/>
    <property type="evidence" value="ECO:0007669"/>
    <property type="project" value="UniProtKB-UniRule"/>
</dbReference>
<dbReference type="GO" id="GO:0009234">
    <property type="term" value="P:menaquinone biosynthetic process"/>
    <property type="evidence" value="ECO:0007669"/>
    <property type="project" value="UniProtKB-UniRule"/>
</dbReference>
<dbReference type="CDD" id="cd13634">
    <property type="entry name" value="PBP2_Sco4506"/>
    <property type="match status" value="1"/>
</dbReference>
<dbReference type="Gene3D" id="3.40.190.10">
    <property type="entry name" value="Periplasmic binding protein-like II"/>
    <property type="match status" value="2"/>
</dbReference>
<dbReference type="HAMAP" id="MF_00995">
    <property type="entry name" value="MqnA"/>
    <property type="match status" value="1"/>
</dbReference>
<dbReference type="InterPro" id="IPR003773">
    <property type="entry name" value="Menaquinone_biosynth"/>
</dbReference>
<dbReference type="InterPro" id="IPR030868">
    <property type="entry name" value="MqnA"/>
</dbReference>
<dbReference type="PANTHER" id="PTHR37690">
    <property type="entry name" value="CHORISMATE DEHYDRATASE"/>
    <property type="match status" value="1"/>
</dbReference>
<dbReference type="PANTHER" id="PTHR37690:SF1">
    <property type="entry name" value="CHORISMATE DEHYDRATASE"/>
    <property type="match status" value="1"/>
</dbReference>
<dbReference type="Pfam" id="PF02621">
    <property type="entry name" value="VitK2_biosynth"/>
    <property type="match status" value="1"/>
</dbReference>
<dbReference type="SUPFAM" id="SSF53850">
    <property type="entry name" value="Periplasmic binding protein-like II"/>
    <property type="match status" value="1"/>
</dbReference>
<protein>
    <recommendedName>
        <fullName evidence="1">Chorismate dehydratase</fullName>
        <ecNumber evidence="1">4.2.1.151</ecNumber>
    </recommendedName>
    <alternativeName>
        <fullName evidence="1">Menaquinone biosynthetic enzyme MqnA</fullName>
    </alternativeName>
</protein>
<accession>Q9L0T8</accession>
<accession>B5MG03</accession>
<keyword id="KW-0002">3D-structure</keyword>
<keyword id="KW-0456">Lyase</keyword>
<keyword id="KW-0474">Menaquinone biosynthesis</keyword>
<keyword id="KW-1185">Reference proteome</keyword>